<feature type="chain" id="PRO_0000285493" description="Polyglutamine-binding protein 1">
    <location>
        <begin position="1"/>
        <end position="265"/>
    </location>
</feature>
<feature type="domain" description="WW" evidence="3">
    <location>
        <begin position="46"/>
        <end position="80"/>
    </location>
</feature>
<feature type="repeat" description="1-1">
    <location>
        <begin position="104"/>
        <end position="110"/>
    </location>
</feature>
<feature type="repeat" description="1-2">
    <location>
        <begin position="111"/>
        <end position="117"/>
    </location>
</feature>
<feature type="repeat" description="1-3">
    <location>
        <begin position="118"/>
        <end position="124"/>
    </location>
</feature>
<feature type="repeat" description="1-4">
    <location>
        <begin position="125"/>
        <end position="131"/>
    </location>
</feature>
<feature type="repeat" description="1-5">
    <location>
        <begin position="132"/>
        <end position="138"/>
    </location>
</feature>
<feature type="repeat" description="2-1">
    <location>
        <begin position="139"/>
        <end position="140"/>
    </location>
</feature>
<feature type="repeat" description="2-2">
    <location>
        <begin position="141"/>
        <end position="142"/>
    </location>
</feature>
<feature type="repeat" description="2-3">
    <location>
        <begin position="143"/>
        <end position="144"/>
    </location>
</feature>
<feature type="repeat" description="3-1">
    <location>
        <begin position="150"/>
        <end position="151"/>
    </location>
</feature>
<feature type="repeat" description="3-2">
    <location>
        <begin position="152"/>
        <end position="153"/>
    </location>
</feature>
<feature type="repeat" description="3-3">
    <location>
        <begin position="154"/>
        <end position="155"/>
    </location>
</feature>
<feature type="repeat" description="3-4">
    <location>
        <begin position="156"/>
        <end position="157"/>
    </location>
</feature>
<feature type="repeat" description="3-5">
    <location>
        <begin position="158"/>
        <end position="159"/>
    </location>
</feature>
<feature type="repeat" description="3-6">
    <location>
        <begin position="160"/>
        <end position="161"/>
    </location>
</feature>
<feature type="repeat" description="3-7">
    <location>
        <begin position="162"/>
        <end position="163"/>
    </location>
</feature>
<feature type="region of interest" description="Disordered" evidence="1">
    <location>
        <begin position="94"/>
        <end position="265"/>
    </location>
</feature>
<feature type="region of interest" description="5 X 7 AA approximate tandem repeats of D-R-[SG]-H-D-K-S">
    <location>
        <begin position="104"/>
        <end position="138"/>
    </location>
</feature>
<feature type="region of interest" description="3 X 2 AA tandem repeats of [DE]-R">
    <location>
        <begin position="139"/>
        <end position="144"/>
    </location>
</feature>
<feature type="region of interest" description="7 X 2 AA tandem repeats of [DE]-R">
    <location>
        <begin position="150"/>
        <end position="163"/>
    </location>
</feature>
<feature type="region of interest" description="Important for interaction with TXNL4A" evidence="1">
    <location>
        <begin position="245"/>
        <end position="255"/>
    </location>
</feature>
<feature type="compositionally biased region" description="Basic and acidic residues" evidence="4">
    <location>
        <begin position="99"/>
        <end position="175"/>
    </location>
</feature>
<feature type="modified residue" description="Phosphoserine" evidence="1">
    <location>
        <position position="94"/>
    </location>
</feature>
<feature type="modified residue" description="Phosphoserine" evidence="1">
    <location>
        <position position="247"/>
    </location>
</feature>
<dbReference type="EMBL" id="DQ976550">
    <property type="protein sequence ID" value="ABM46825.1"/>
    <property type="molecule type" value="Genomic_DNA"/>
</dbReference>
<dbReference type="RefSeq" id="XP_004064161.1">
    <property type="nucleotide sequence ID" value="XM_004064113.2"/>
</dbReference>
<dbReference type="RefSeq" id="XP_004064163.1">
    <property type="nucleotide sequence ID" value="XM_004064115.3"/>
</dbReference>
<dbReference type="RefSeq" id="XP_018874785.1">
    <property type="nucleotide sequence ID" value="XM_019019240.3"/>
</dbReference>
<dbReference type="RefSeq" id="XP_018874786.1">
    <property type="nucleotide sequence ID" value="XM_019019241.2"/>
</dbReference>
<dbReference type="RefSeq" id="XP_018874787.1">
    <property type="nucleotide sequence ID" value="XM_019019242.2"/>
</dbReference>
<dbReference type="RefSeq" id="XP_063559018.1">
    <property type="nucleotide sequence ID" value="XM_063702948.1"/>
</dbReference>
<dbReference type="SMR" id="A1YFA7"/>
<dbReference type="FunCoup" id="A1YFA7">
    <property type="interactions" value="3114"/>
</dbReference>
<dbReference type="STRING" id="9593.ENSGGOP00000011148"/>
<dbReference type="Ensembl" id="ENSGGOT00000011476.3">
    <property type="protein sequence ID" value="ENSGGOP00000011148.2"/>
    <property type="gene ID" value="ENSGGOG00000011431.3"/>
</dbReference>
<dbReference type="GeneID" id="101150130"/>
<dbReference type="KEGG" id="ggo:101150130"/>
<dbReference type="CTD" id="10084"/>
<dbReference type="eggNOG" id="KOG3427">
    <property type="taxonomic scope" value="Eukaryota"/>
</dbReference>
<dbReference type="GeneTree" id="ENSGT00950000183102"/>
<dbReference type="HOGENOM" id="CLU_043596_1_0_1"/>
<dbReference type="InParanoid" id="A1YFA7"/>
<dbReference type="OMA" id="IYHECSK"/>
<dbReference type="OrthoDB" id="14227at9604"/>
<dbReference type="Proteomes" id="UP000001519">
    <property type="component" value="Chromosome X"/>
</dbReference>
<dbReference type="Bgee" id="ENSGGOG00000011431">
    <property type="expression patterns" value="Expressed in cerebellum and 5 other cell types or tissues"/>
</dbReference>
<dbReference type="GO" id="GO:0036064">
    <property type="term" value="C:ciliary basal body"/>
    <property type="evidence" value="ECO:0007669"/>
    <property type="project" value="Ensembl"/>
</dbReference>
<dbReference type="GO" id="GO:0005737">
    <property type="term" value="C:cytoplasm"/>
    <property type="evidence" value="ECO:0000318"/>
    <property type="project" value="GO_Central"/>
</dbReference>
<dbReference type="GO" id="GO:0010494">
    <property type="term" value="C:cytoplasmic stress granule"/>
    <property type="evidence" value="ECO:0007669"/>
    <property type="project" value="Ensembl"/>
</dbReference>
<dbReference type="GO" id="GO:0005829">
    <property type="term" value="C:cytosol"/>
    <property type="evidence" value="ECO:0007669"/>
    <property type="project" value="Ensembl"/>
</dbReference>
<dbReference type="GO" id="GO:0071598">
    <property type="term" value="C:neuronal ribonucleoprotein granule"/>
    <property type="evidence" value="ECO:0007669"/>
    <property type="project" value="Ensembl"/>
</dbReference>
<dbReference type="GO" id="GO:0016604">
    <property type="term" value="C:nuclear body"/>
    <property type="evidence" value="ECO:0000318"/>
    <property type="project" value="GO_Central"/>
</dbReference>
<dbReference type="GO" id="GO:0016607">
    <property type="term" value="C:nuclear speck"/>
    <property type="evidence" value="ECO:0000250"/>
    <property type="project" value="UniProtKB"/>
</dbReference>
<dbReference type="GO" id="GO:0003690">
    <property type="term" value="F:double-stranded DNA binding"/>
    <property type="evidence" value="ECO:0000250"/>
    <property type="project" value="UniProtKB"/>
</dbReference>
<dbReference type="GO" id="GO:0043021">
    <property type="term" value="F:ribonucleoprotein complex binding"/>
    <property type="evidence" value="ECO:0000318"/>
    <property type="project" value="GO_Central"/>
</dbReference>
<dbReference type="GO" id="GO:0002218">
    <property type="term" value="P:activation of innate immune response"/>
    <property type="evidence" value="ECO:0000250"/>
    <property type="project" value="UniProtKB"/>
</dbReference>
<dbReference type="GO" id="GO:0000380">
    <property type="term" value="P:alternative mRNA splicing, via spliceosome"/>
    <property type="evidence" value="ECO:0000250"/>
    <property type="project" value="UniProtKB"/>
</dbReference>
<dbReference type="GO" id="GO:0071360">
    <property type="term" value="P:cellular response to exogenous dsRNA"/>
    <property type="evidence" value="ECO:0000250"/>
    <property type="project" value="UniProtKB"/>
</dbReference>
<dbReference type="GO" id="GO:0051607">
    <property type="term" value="P:defense response to virus"/>
    <property type="evidence" value="ECO:0000250"/>
    <property type="project" value="UniProtKB"/>
</dbReference>
<dbReference type="GO" id="GO:0045087">
    <property type="term" value="P:innate immune response"/>
    <property type="evidence" value="ECO:0007669"/>
    <property type="project" value="UniProtKB-KW"/>
</dbReference>
<dbReference type="GO" id="GO:0031175">
    <property type="term" value="P:neuron projection development"/>
    <property type="evidence" value="ECO:0000250"/>
    <property type="project" value="UniProtKB"/>
</dbReference>
<dbReference type="GO" id="GO:0002230">
    <property type="term" value="P:positive regulation of defense response to virus by host"/>
    <property type="evidence" value="ECO:0000250"/>
    <property type="project" value="UniProtKB"/>
</dbReference>
<dbReference type="GO" id="GO:0032481">
    <property type="term" value="P:positive regulation of type I interferon production"/>
    <property type="evidence" value="ECO:0000250"/>
    <property type="project" value="UniProtKB"/>
</dbReference>
<dbReference type="GO" id="GO:0048814">
    <property type="term" value="P:regulation of dendrite morphogenesis"/>
    <property type="evidence" value="ECO:0007669"/>
    <property type="project" value="Ensembl"/>
</dbReference>
<dbReference type="GO" id="GO:0043484">
    <property type="term" value="P:regulation of RNA splicing"/>
    <property type="evidence" value="ECO:0007669"/>
    <property type="project" value="Ensembl"/>
</dbReference>
<dbReference type="FunFam" id="3.40.30.10:FF:000140">
    <property type="entry name" value="polyglutamine-binding protein 1 isoform X1"/>
    <property type="match status" value="1"/>
</dbReference>
<dbReference type="Gene3D" id="2.20.70.10">
    <property type="match status" value="1"/>
</dbReference>
<dbReference type="Gene3D" id="3.40.30.10">
    <property type="entry name" value="Glutaredoxin"/>
    <property type="match status" value="1"/>
</dbReference>
<dbReference type="InterPro" id="IPR001202">
    <property type="entry name" value="WW_dom"/>
</dbReference>
<dbReference type="InterPro" id="IPR036020">
    <property type="entry name" value="WW_dom_sf"/>
</dbReference>
<dbReference type="PANTHER" id="PTHR21737">
    <property type="entry name" value="POLYGLUTAMINE BINDING PROTEIN 1/MARVEL MEMBRANE-ASSOCIATING DOMAIN CONTAINING 3"/>
    <property type="match status" value="1"/>
</dbReference>
<dbReference type="PANTHER" id="PTHR21737:SF3">
    <property type="entry name" value="POLYGLUTAMINE-BINDING PROTEIN 1"/>
    <property type="match status" value="1"/>
</dbReference>
<dbReference type="SMART" id="SM00456">
    <property type="entry name" value="WW"/>
    <property type="match status" value="1"/>
</dbReference>
<dbReference type="SUPFAM" id="SSF51045">
    <property type="entry name" value="WW domain"/>
    <property type="match status" value="1"/>
</dbReference>
<dbReference type="PROSITE" id="PS50020">
    <property type="entry name" value="WW_DOMAIN_2"/>
    <property type="match status" value="1"/>
</dbReference>
<evidence type="ECO:0000250" key="1">
    <source>
        <dbReference type="UniProtKB" id="O60828"/>
    </source>
</evidence>
<evidence type="ECO:0000250" key="2">
    <source>
        <dbReference type="UniProtKB" id="Q91VJ5"/>
    </source>
</evidence>
<evidence type="ECO:0000255" key="3">
    <source>
        <dbReference type="PROSITE-ProRule" id="PRU00224"/>
    </source>
</evidence>
<evidence type="ECO:0000256" key="4">
    <source>
        <dbReference type="SAM" id="MobiDB-lite"/>
    </source>
</evidence>
<reference key="1">
    <citation type="submission" date="2006-08" db="EMBL/GenBank/DDBJ databases">
        <title>Positive selection in transcription factor genes on the human lineage.</title>
        <authorList>
            <person name="Nickel G.C."/>
            <person name="Tefft D.L."/>
            <person name="Trevarthen K."/>
            <person name="Funt J."/>
            <person name="Adams M.D."/>
        </authorList>
    </citation>
    <scope>NUCLEOTIDE SEQUENCE [GENOMIC DNA]</scope>
</reference>
<organism>
    <name type="scientific">Gorilla gorilla gorilla</name>
    <name type="common">Western lowland gorilla</name>
    <dbReference type="NCBI Taxonomy" id="9595"/>
    <lineage>
        <taxon>Eukaryota</taxon>
        <taxon>Metazoa</taxon>
        <taxon>Chordata</taxon>
        <taxon>Craniata</taxon>
        <taxon>Vertebrata</taxon>
        <taxon>Euteleostomi</taxon>
        <taxon>Mammalia</taxon>
        <taxon>Eutheria</taxon>
        <taxon>Euarchontoglires</taxon>
        <taxon>Primates</taxon>
        <taxon>Haplorrhini</taxon>
        <taxon>Catarrhini</taxon>
        <taxon>Hominidae</taxon>
        <taxon>Gorilla</taxon>
    </lineage>
</organism>
<keyword id="KW-0391">Immunity</keyword>
<keyword id="KW-0399">Innate immunity</keyword>
<keyword id="KW-0507">mRNA processing</keyword>
<keyword id="KW-0508">mRNA splicing</keyword>
<keyword id="KW-0539">Nucleus</keyword>
<keyword id="KW-0597">Phosphoprotein</keyword>
<keyword id="KW-1185">Reference proteome</keyword>
<keyword id="KW-0677">Repeat</keyword>
<keyword id="KW-0804">Transcription</keyword>
<keyword id="KW-0805">Transcription regulation</keyword>
<sequence>MPLPVALQTRLAKRGILKHLEPEPEEEIIAEDYDDDPVDYEATRLEGLPPSWYKVFDPSCGLPYYWNADTDLVSWLSPHDPNSVVTKSAKKLRSSNADAEEKLDRSHDKSDRGHDKSDRSHEKLDRGHDKSDRGHDKSDRDRERGYDKVDRERERDRERDRDRGYDKADREEGKERRHHRREELAPYPKSKKAVSRKDEELDPMDPSSYSDAPRGTWSTGLPKRNEAKTGADTTAAGPLFQQRPYPSPGAVLRANAEASRTKQQD</sequence>
<gene>
    <name type="primary">PQBP1</name>
</gene>
<proteinExistence type="inferred from homology"/>
<comment type="function">
    <text evidence="1">Intrinsically disordered protein that acts as a scaffold, and which is involved in different processes, such as pre-mRNA splicing, transcription regulation, innate immunity and neuron development. Interacts with splicing-related factors via the intrinsically disordered region and regulates alternative splicing of target pre-mRNA species. May suppress the ability of POU3F2 to transactivate the DRD1 gene in a POU3F2 dependent manner. Can activate transcription directly or via association with the transcription machinery. May be involved in ATXN1 mutant-induced cell death. The interaction with ATXN1 mutant reduces levels of phosphorylated RNA polymerase II large subunit. Involved in the assembly of cytoplasmic stress granule, possibly by participating in the transport of neuronal RNA granules. Also acts as an innate immune sensor of infection by retroviruses, by detecting the presence of reverse-transcribed DNA in the cytosol. Directly binds retroviral reverse-transcribed DNA in the cytosol and interacts with CGAS, leading to activate the cGAS-STING signaling pathway, triggering type-I interferon production.</text>
</comment>
<comment type="subunit">
    <text evidence="1">Interacts with POU3F2/Brn-2, ATXN1, TXNL4A, HTT and AR. Interaction with ATXN1 correlates positively with the length of the polyglutamine tract. Interacts with RNA polymerase II large subunit in a phosphorylation-dependent manner. Forms a ternary complex with ATXN1 mutant and phosphorylated RNA polymerase II. Interacts (via C-terminus) with TXNL4A and CD2BP2. Interacts (via WW domain) with ATN1 and SF3B1, and may interact with additional splice factors. Interacts (via WW domain) with WBP11; Leading to reduce interaction between PQBP1 and TXNL4A. Interacts with CAPRIN1. Interacts with DDX1. Interacts with SFPQ. Interacts with KHSRP.</text>
</comment>
<comment type="subcellular location">
    <subcellularLocation>
        <location evidence="1">Nucleus</location>
    </subcellularLocation>
    <subcellularLocation>
        <location evidence="2">Nucleus speckle</location>
    </subcellularLocation>
    <subcellularLocation>
        <location evidence="1">Cytoplasmic granule</location>
    </subcellularLocation>
    <text evidence="1 2">Colocalizes with SRSF2 in nuclear speckles (By similarity). Colocalized with POU3F2. Colocalized with ATXN1 in nuclear inclusion bodies. Localizes to cytoplasmic stress granules (By similarity).</text>
</comment>
<comment type="domain">
    <text evidence="1">The WW domain may play a role as a transcriptional activator directly or via association with the transcription machinery. The WW domain mediates interaction with WBP11, ATN1, SF3B1 and the C-terminal domain of the RNA polymerase II large subunit.</text>
</comment>
<comment type="domain">
    <text evidence="1">Except for the WW domain, the protein is intrinsically disordered.</text>
</comment>
<protein>
    <recommendedName>
        <fullName>Polyglutamine-binding protein 1</fullName>
        <shortName>PQBP-1</shortName>
    </recommendedName>
    <alternativeName>
        <fullName>Polyglutamine tract-binding protein 1</fullName>
    </alternativeName>
</protein>
<accession>A1YFA7</accession>
<name>PQBP1_GORGO</name>